<organism>
    <name type="scientific">Psychromonas ingrahamii (strain DSM 17664 / CCUG 51855 / 37)</name>
    <dbReference type="NCBI Taxonomy" id="357804"/>
    <lineage>
        <taxon>Bacteria</taxon>
        <taxon>Pseudomonadati</taxon>
        <taxon>Pseudomonadota</taxon>
        <taxon>Gammaproteobacteria</taxon>
        <taxon>Alteromonadales</taxon>
        <taxon>Psychromonadaceae</taxon>
        <taxon>Psychromonas</taxon>
    </lineage>
</organism>
<name>MAO1_PSYIN</name>
<protein>
    <recommendedName>
        <fullName evidence="1">NAD-dependent malic enzyme</fullName>
        <shortName evidence="1">NAD-ME</shortName>
        <ecNumber evidence="1">1.1.1.38</ecNumber>
    </recommendedName>
</protein>
<gene>
    <name evidence="1" type="primary">maeA</name>
    <name type="ordered locus">Ping_0537</name>
</gene>
<keyword id="KW-0479">Metal-binding</keyword>
<keyword id="KW-0520">NAD</keyword>
<keyword id="KW-0560">Oxidoreductase</keyword>
<keyword id="KW-1185">Reference proteome</keyword>
<evidence type="ECO:0000255" key="1">
    <source>
        <dbReference type="HAMAP-Rule" id="MF_01619"/>
    </source>
</evidence>
<dbReference type="EC" id="1.1.1.38" evidence="1"/>
<dbReference type="EMBL" id="CP000510">
    <property type="protein sequence ID" value="ABM02391.1"/>
    <property type="molecule type" value="Genomic_DNA"/>
</dbReference>
<dbReference type="RefSeq" id="WP_011768950.1">
    <property type="nucleotide sequence ID" value="NC_008709.1"/>
</dbReference>
<dbReference type="SMR" id="A1SSC6"/>
<dbReference type="STRING" id="357804.Ping_0537"/>
<dbReference type="KEGG" id="pin:Ping_0537"/>
<dbReference type="eggNOG" id="COG0281">
    <property type="taxonomic scope" value="Bacteria"/>
</dbReference>
<dbReference type="HOGENOM" id="CLU_011405_5_2_6"/>
<dbReference type="OrthoDB" id="3314528at2"/>
<dbReference type="Proteomes" id="UP000000639">
    <property type="component" value="Chromosome"/>
</dbReference>
<dbReference type="GO" id="GO:0005829">
    <property type="term" value="C:cytosol"/>
    <property type="evidence" value="ECO:0007669"/>
    <property type="project" value="TreeGrafter"/>
</dbReference>
<dbReference type="GO" id="GO:0004471">
    <property type="term" value="F:malate dehydrogenase (decarboxylating) (NAD+) activity"/>
    <property type="evidence" value="ECO:0007669"/>
    <property type="project" value="UniProtKB-UniRule"/>
</dbReference>
<dbReference type="GO" id="GO:0046872">
    <property type="term" value="F:metal ion binding"/>
    <property type="evidence" value="ECO:0007669"/>
    <property type="project" value="UniProtKB-KW"/>
</dbReference>
<dbReference type="GO" id="GO:0051287">
    <property type="term" value="F:NAD binding"/>
    <property type="evidence" value="ECO:0007669"/>
    <property type="project" value="InterPro"/>
</dbReference>
<dbReference type="GO" id="GO:0008948">
    <property type="term" value="F:oxaloacetate decarboxylase activity"/>
    <property type="evidence" value="ECO:0007669"/>
    <property type="project" value="UniProtKB-UniRule"/>
</dbReference>
<dbReference type="GO" id="GO:0006108">
    <property type="term" value="P:malate metabolic process"/>
    <property type="evidence" value="ECO:0007669"/>
    <property type="project" value="TreeGrafter"/>
</dbReference>
<dbReference type="FunFam" id="3.40.50.10380:FF:000001">
    <property type="entry name" value="NAD-dependent malic enzyme"/>
    <property type="match status" value="1"/>
</dbReference>
<dbReference type="Gene3D" id="3.40.50.10380">
    <property type="entry name" value="Malic enzyme, N-terminal domain"/>
    <property type="match status" value="1"/>
</dbReference>
<dbReference type="Gene3D" id="3.40.50.720">
    <property type="entry name" value="NAD(P)-binding Rossmann-like Domain"/>
    <property type="match status" value="1"/>
</dbReference>
<dbReference type="HAMAP" id="MF_01619">
    <property type="entry name" value="NAD_malic_enz"/>
    <property type="match status" value="1"/>
</dbReference>
<dbReference type="InterPro" id="IPR046346">
    <property type="entry name" value="Aminoacid_DH-like_N_sf"/>
</dbReference>
<dbReference type="InterPro" id="IPR015884">
    <property type="entry name" value="Malic_enzyme_CS"/>
</dbReference>
<dbReference type="InterPro" id="IPR012301">
    <property type="entry name" value="Malic_N_dom"/>
</dbReference>
<dbReference type="InterPro" id="IPR037062">
    <property type="entry name" value="Malic_N_dom_sf"/>
</dbReference>
<dbReference type="InterPro" id="IPR012302">
    <property type="entry name" value="Malic_NAD-bd"/>
</dbReference>
<dbReference type="InterPro" id="IPR001891">
    <property type="entry name" value="Malic_OxRdtase"/>
</dbReference>
<dbReference type="InterPro" id="IPR036291">
    <property type="entry name" value="NAD(P)-bd_dom_sf"/>
</dbReference>
<dbReference type="InterPro" id="IPR023667">
    <property type="entry name" value="NAD_malic_enz_proteobac"/>
</dbReference>
<dbReference type="NCBIfam" id="NF010052">
    <property type="entry name" value="PRK13529.1"/>
    <property type="match status" value="1"/>
</dbReference>
<dbReference type="PANTHER" id="PTHR23406">
    <property type="entry name" value="MALIC ENZYME-RELATED"/>
    <property type="match status" value="1"/>
</dbReference>
<dbReference type="PANTHER" id="PTHR23406:SF34">
    <property type="entry name" value="NAD-DEPENDENT MALIC ENZYME, MITOCHONDRIAL"/>
    <property type="match status" value="1"/>
</dbReference>
<dbReference type="Pfam" id="PF00390">
    <property type="entry name" value="malic"/>
    <property type="match status" value="1"/>
</dbReference>
<dbReference type="Pfam" id="PF03949">
    <property type="entry name" value="Malic_M"/>
    <property type="match status" value="1"/>
</dbReference>
<dbReference type="PIRSF" id="PIRSF000106">
    <property type="entry name" value="ME"/>
    <property type="match status" value="1"/>
</dbReference>
<dbReference type="PRINTS" id="PR00072">
    <property type="entry name" value="MALOXRDTASE"/>
</dbReference>
<dbReference type="SMART" id="SM01274">
    <property type="entry name" value="malic"/>
    <property type="match status" value="1"/>
</dbReference>
<dbReference type="SMART" id="SM00919">
    <property type="entry name" value="Malic_M"/>
    <property type="match status" value="1"/>
</dbReference>
<dbReference type="SUPFAM" id="SSF53223">
    <property type="entry name" value="Aminoacid dehydrogenase-like, N-terminal domain"/>
    <property type="match status" value="1"/>
</dbReference>
<dbReference type="SUPFAM" id="SSF51735">
    <property type="entry name" value="NAD(P)-binding Rossmann-fold domains"/>
    <property type="match status" value="1"/>
</dbReference>
<dbReference type="PROSITE" id="PS00331">
    <property type="entry name" value="MALIC_ENZYMES"/>
    <property type="match status" value="1"/>
</dbReference>
<accession>A1SSC6</accession>
<comment type="catalytic activity">
    <reaction evidence="1">
        <text>(S)-malate + NAD(+) = pyruvate + CO2 + NADH</text>
        <dbReference type="Rhea" id="RHEA:12653"/>
        <dbReference type="ChEBI" id="CHEBI:15361"/>
        <dbReference type="ChEBI" id="CHEBI:15589"/>
        <dbReference type="ChEBI" id="CHEBI:16526"/>
        <dbReference type="ChEBI" id="CHEBI:57540"/>
        <dbReference type="ChEBI" id="CHEBI:57945"/>
        <dbReference type="EC" id="1.1.1.38"/>
    </reaction>
</comment>
<comment type="catalytic activity">
    <reaction evidence="1">
        <text>oxaloacetate + H(+) = pyruvate + CO2</text>
        <dbReference type="Rhea" id="RHEA:15641"/>
        <dbReference type="ChEBI" id="CHEBI:15361"/>
        <dbReference type="ChEBI" id="CHEBI:15378"/>
        <dbReference type="ChEBI" id="CHEBI:16452"/>
        <dbReference type="ChEBI" id="CHEBI:16526"/>
        <dbReference type="EC" id="1.1.1.38"/>
    </reaction>
</comment>
<comment type="cofactor">
    <cofactor evidence="1">
        <name>Mg(2+)</name>
        <dbReference type="ChEBI" id="CHEBI:18420"/>
    </cofactor>
    <cofactor evidence="1">
        <name>Mn(2+)</name>
        <dbReference type="ChEBI" id="CHEBI:29035"/>
    </cofactor>
    <text evidence="1">Divalent metal cations. Prefers magnesium or manganese.</text>
</comment>
<comment type="subunit">
    <text evidence="1">Homotetramer.</text>
</comment>
<comment type="similarity">
    <text evidence="1">Belongs to the malic enzymes family.</text>
</comment>
<sequence length="560" mass="62299">MTFQRPLYIPFAGPALLESPLLNKGSAFSQEERNNFNLTGLLPHNIETIESQSTRAYQQLSSFKSDLDKHIYLRNIQDTNETLFHHLIENHLEEVMPLIYTPTVGLACEQFSKIYRRKRGLFVSYPERHKIDDMLQNATKQNVKVIVVTDGERILGLGDQGIGGMGIPIGKLALYTACGGISPAYCLPIVLDVGTNNSQLLADPMYMGWRNPRITGEEYNEFVDLFIQAVKRRWPEVLLQFEDFAQTNATPLLNKYRDQICCFNDDIQGTAAVSVGTLIAACQNKGEKLSDQRIAFLGSGSAGCGIAQHIVRQMQREGLTQEQARQRVFMVDRYGLLTDQMTNLQAFQQPLIQYTKDLSHWDISSHIGLEQVIKQGNISVLFGVSGQPGLFTQEVVESLCANVDHPIVLPLSNPTSRVEATPKDITTWSHGQAIVATGSPFPPTLYENEYIEVSQCNNSYIFPGIGLGVLAARATAISDNMLMAASQALADASMQYEKVKGALLPPLGEIRPISKSIAYAVAKQAIADGLALPVSEETMQRRLVDNFWAPKYRTYRRTSF</sequence>
<proteinExistence type="inferred from homology"/>
<reference key="1">
    <citation type="journal article" date="2008" name="BMC Genomics">
        <title>Genomics of an extreme psychrophile, Psychromonas ingrahamii.</title>
        <authorList>
            <person name="Riley M."/>
            <person name="Staley J.T."/>
            <person name="Danchin A."/>
            <person name="Wang T.Z."/>
            <person name="Brettin T.S."/>
            <person name="Hauser L.J."/>
            <person name="Land M.L."/>
            <person name="Thompson L.S."/>
        </authorList>
    </citation>
    <scope>NUCLEOTIDE SEQUENCE [LARGE SCALE GENOMIC DNA]</scope>
    <source>
        <strain>DSM 17664 / CCUG 51855 / 37</strain>
    </source>
</reference>
<feature type="chain" id="PRO_1000069536" description="NAD-dependent malic enzyme">
    <location>
        <begin position="1"/>
        <end position="560"/>
    </location>
</feature>
<feature type="active site" description="Proton donor" evidence="1">
    <location>
        <position position="100"/>
    </location>
</feature>
<feature type="active site" description="Proton acceptor" evidence="1">
    <location>
        <position position="171"/>
    </location>
</feature>
<feature type="binding site" evidence="1">
    <location>
        <position position="153"/>
    </location>
    <ligand>
        <name>NAD(+)</name>
        <dbReference type="ChEBI" id="CHEBI:57540"/>
    </ligand>
</feature>
<feature type="binding site" evidence="1">
    <location>
        <position position="242"/>
    </location>
    <ligand>
        <name>a divalent metal cation</name>
        <dbReference type="ChEBI" id="CHEBI:60240"/>
    </ligand>
</feature>
<feature type="binding site" evidence="1">
    <location>
        <position position="243"/>
    </location>
    <ligand>
        <name>a divalent metal cation</name>
        <dbReference type="ChEBI" id="CHEBI:60240"/>
    </ligand>
</feature>
<feature type="binding site" evidence="1">
    <location>
        <position position="266"/>
    </location>
    <ligand>
        <name>a divalent metal cation</name>
        <dbReference type="ChEBI" id="CHEBI:60240"/>
    </ligand>
</feature>
<feature type="binding site" evidence="1">
    <location>
        <position position="266"/>
    </location>
    <ligand>
        <name>NAD(+)</name>
        <dbReference type="ChEBI" id="CHEBI:57540"/>
    </ligand>
</feature>
<feature type="binding site" evidence="1">
    <location>
        <position position="413"/>
    </location>
    <ligand>
        <name>NAD(+)</name>
        <dbReference type="ChEBI" id="CHEBI:57540"/>
    </ligand>
</feature>
<feature type="site" description="Important for activity" evidence="1">
    <location>
        <position position="266"/>
    </location>
</feature>